<gene>
    <name evidence="1" type="primary">araG2</name>
    <name type="ordered locus">BTH_II1627</name>
</gene>
<organism>
    <name type="scientific">Burkholderia thailandensis (strain ATCC 700388 / DSM 13276 / CCUG 48851 / CIP 106301 / E264)</name>
    <dbReference type="NCBI Taxonomy" id="271848"/>
    <lineage>
        <taxon>Bacteria</taxon>
        <taxon>Pseudomonadati</taxon>
        <taxon>Pseudomonadota</taxon>
        <taxon>Betaproteobacteria</taxon>
        <taxon>Burkholderiales</taxon>
        <taxon>Burkholderiaceae</taxon>
        <taxon>Burkholderia</taxon>
        <taxon>pseudomallei group</taxon>
    </lineage>
</organism>
<evidence type="ECO:0000255" key="1">
    <source>
        <dbReference type="HAMAP-Rule" id="MF_01721"/>
    </source>
</evidence>
<evidence type="ECO:0000256" key="2">
    <source>
        <dbReference type="SAM" id="MobiDB-lite"/>
    </source>
</evidence>
<protein>
    <recommendedName>
        <fullName evidence="1">Arabinose import ATP-binding protein AraG 2</fullName>
        <ecNumber evidence="1">7.5.2.12</ecNumber>
    </recommendedName>
</protein>
<proteinExistence type="inferred from homology"/>
<reference key="1">
    <citation type="journal article" date="2005" name="BMC Genomics">
        <title>Bacterial genome adaptation to niches: divergence of the potential virulence genes in three Burkholderia species of different survival strategies.</title>
        <authorList>
            <person name="Kim H.S."/>
            <person name="Schell M.A."/>
            <person name="Yu Y."/>
            <person name="Ulrich R.L."/>
            <person name="Sarria S.H."/>
            <person name="Nierman W.C."/>
            <person name="DeShazer D."/>
        </authorList>
    </citation>
    <scope>NUCLEOTIDE SEQUENCE [LARGE SCALE GENOMIC DNA]</scope>
    <source>
        <strain>ATCC 700388 / DSM 13276 / CCUG 48851 / CIP 106301 / E264</strain>
    </source>
</reference>
<keyword id="KW-0067">ATP-binding</keyword>
<keyword id="KW-0997">Cell inner membrane</keyword>
<keyword id="KW-1003">Cell membrane</keyword>
<keyword id="KW-0472">Membrane</keyword>
<keyword id="KW-0547">Nucleotide-binding</keyword>
<keyword id="KW-0677">Repeat</keyword>
<keyword id="KW-0762">Sugar transport</keyword>
<keyword id="KW-1278">Translocase</keyword>
<keyword id="KW-0813">Transport</keyword>
<name>ARAG2_BURTA</name>
<comment type="function">
    <text evidence="1">Part of the ABC transporter complex AraFGH involved in arabinose import. Responsible for energy coupling to the transport system.</text>
</comment>
<comment type="catalytic activity">
    <reaction evidence="1">
        <text>L-arabinose(out) + ATP + H2O = L-arabinose(in) + ADP + phosphate + H(+)</text>
        <dbReference type="Rhea" id="RHEA:30007"/>
        <dbReference type="ChEBI" id="CHEBI:15377"/>
        <dbReference type="ChEBI" id="CHEBI:15378"/>
        <dbReference type="ChEBI" id="CHEBI:17535"/>
        <dbReference type="ChEBI" id="CHEBI:30616"/>
        <dbReference type="ChEBI" id="CHEBI:43474"/>
        <dbReference type="ChEBI" id="CHEBI:456216"/>
        <dbReference type="EC" id="7.5.2.12"/>
    </reaction>
</comment>
<comment type="subunit">
    <text evidence="1">The complex is composed of two ATP-binding proteins (AraG), two transmembrane proteins (AraH) and a solute-binding protein (AraF).</text>
</comment>
<comment type="subcellular location">
    <subcellularLocation>
        <location evidence="1">Cell inner membrane</location>
        <topology evidence="1">Peripheral membrane protein</topology>
    </subcellularLocation>
</comment>
<comment type="similarity">
    <text evidence="1">Belongs to the ABC transporter superfamily. Arabinose importer (TC 3.A.1.2.2) family.</text>
</comment>
<dbReference type="EC" id="7.5.2.12" evidence="1"/>
<dbReference type="EMBL" id="CP000085">
    <property type="protein sequence ID" value="ABC34189.1"/>
    <property type="molecule type" value="Genomic_DNA"/>
</dbReference>
<dbReference type="SMR" id="Q2T4S8"/>
<dbReference type="GeneID" id="45119068"/>
<dbReference type="KEGG" id="bte:BTH_II1627"/>
<dbReference type="HOGENOM" id="CLU_000604_92_3_4"/>
<dbReference type="Proteomes" id="UP000001930">
    <property type="component" value="Chromosome II"/>
</dbReference>
<dbReference type="GO" id="GO:0005886">
    <property type="term" value="C:plasma membrane"/>
    <property type="evidence" value="ECO:0007669"/>
    <property type="project" value="UniProtKB-SubCell"/>
</dbReference>
<dbReference type="GO" id="GO:0015612">
    <property type="term" value="F:ABC-type L-arabinose transporter activity"/>
    <property type="evidence" value="ECO:0007669"/>
    <property type="project" value="UniProtKB-EC"/>
</dbReference>
<dbReference type="GO" id="GO:0005524">
    <property type="term" value="F:ATP binding"/>
    <property type="evidence" value="ECO:0007669"/>
    <property type="project" value="UniProtKB-KW"/>
</dbReference>
<dbReference type="GO" id="GO:0016887">
    <property type="term" value="F:ATP hydrolysis activity"/>
    <property type="evidence" value="ECO:0007669"/>
    <property type="project" value="InterPro"/>
</dbReference>
<dbReference type="CDD" id="cd03216">
    <property type="entry name" value="ABC_Carb_Monos_I"/>
    <property type="match status" value="1"/>
</dbReference>
<dbReference type="CDD" id="cd03215">
    <property type="entry name" value="ABC_Carb_Monos_II"/>
    <property type="match status" value="1"/>
</dbReference>
<dbReference type="FunFam" id="3.40.50.300:FF:000126">
    <property type="entry name" value="Galactose/methyl galactoside import ATP-binding protein MglA"/>
    <property type="match status" value="1"/>
</dbReference>
<dbReference type="FunFam" id="3.40.50.300:FF:000127">
    <property type="entry name" value="Ribose import ATP-binding protein RbsA"/>
    <property type="match status" value="1"/>
</dbReference>
<dbReference type="Gene3D" id="3.40.50.300">
    <property type="entry name" value="P-loop containing nucleotide triphosphate hydrolases"/>
    <property type="match status" value="2"/>
</dbReference>
<dbReference type="InterPro" id="IPR003593">
    <property type="entry name" value="AAA+_ATPase"/>
</dbReference>
<dbReference type="InterPro" id="IPR050107">
    <property type="entry name" value="ABC_carbohydrate_import_ATPase"/>
</dbReference>
<dbReference type="InterPro" id="IPR003439">
    <property type="entry name" value="ABC_transporter-like_ATP-bd"/>
</dbReference>
<dbReference type="InterPro" id="IPR017871">
    <property type="entry name" value="ABC_transporter-like_CS"/>
</dbReference>
<dbReference type="InterPro" id="IPR027417">
    <property type="entry name" value="P-loop_NTPase"/>
</dbReference>
<dbReference type="NCBIfam" id="NF008442">
    <property type="entry name" value="PRK11288.1"/>
    <property type="match status" value="1"/>
</dbReference>
<dbReference type="PANTHER" id="PTHR43790:SF6">
    <property type="entry name" value="ARABINOSE IMPORT ATP-BINDING PROTEIN ARAG"/>
    <property type="match status" value="1"/>
</dbReference>
<dbReference type="PANTHER" id="PTHR43790">
    <property type="entry name" value="CARBOHYDRATE TRANSPORT ATP-BINDING PROTEIN MG119-RELATED"/>
    <property type="match status" value="1"/>
</dbReference>
<dbReference type="Pfam" id="PF00005">
    <property type="entry name" value="ABC_tran"/>
    <property type="match status" value="2"/>
</dbReference>
<dbReference type="SMART" id="SM00382">
    <property type="entry name" value="AAA"/>
    <property type="match status" value="2"/>
</dbReference>
<dbReference type="SUPFAM" id="SSF52540">
    <property type="entry name" value="P-loop containing nucleoside triphosphate hydrolases"/>
    <property type="match status" value="2"/>
</dbReference>
<dbReference type="PROSITE" id="PS00211">
    <property type="entry name" value="ABC_TRANSPORTER_1"/>
    <property type="match status" value="1"/>
</dbReference>
<dbReference type="PROSITE" id="PS50893">
    <property type="entry name" value="ABC_TRANSPORTER_2"/>
    <property type="match status" value="2"/>
</dbReference>
<dbReference type="PROSITE" id="PS51268">
    <property type="entry name" value="ARAG"/>
    <property type="match status" value="1"/>
</dbReference>
<sequence length="525" mass="56397">MTDTTIRARGAQAAGSPAGAGPLDAPDGAPRAACLELDGITVTFPGVRALDAVSLSVRAGEVHGLMGENGAGKSTLLKVLSGVNQPQAGTLRLNGLAQRFGSTRAALEAGIAIIYQELHLVPELTVAENLMLGQLPNRAGVLDERALVARATAELERLGERIDPNTPVKLLSIGQRQMIEIGKALMRDARVIAFDEPTSSLSARETERLFRIIHALRADGRAIIYVTHRMEEVDALCDRVTVFRDGRRIETFESVADLDRDRLIGCMVGRPIADVYGYRPREPGDVAIEAKGLRGPGLAEPVSFSARRGEIVGFFGLVGAGRSELMKLLYGAARPSAGHVELNGRRVSFASPRDAVRAGIALCPEDRKQEGIVAIASVADNLNLSARRHFSPARLLLDARRERELAARYIARLAIKTRDADTPIGALSGGNQQKVILARWLAERIDVFLMDEPTRGIDVGARAEIYNLFYELADAGRTVLIVSSDLAEVIGVSDRIVVMKQGRIAGCVAKAQASPDALIKLALPR</sequence>
<feature type="chain" id="PRO_0000270463" description="Arabinose import ATP-binding protein AraG 2">
    <location>
        <begin position="1"/>
        <end position="525"/>
    </location>
</feature>
<feature type="domain" description="ABC transporter 1" evidence="1">
    <location>
        <begin position="35"/>
        <end position="270"/>
    </location>
</feature>
<feature type="domain" description="ABC transporter 2" evidence="1">
    <location>
        <begin position="281"/>
        <end position="524"/>
    </location>
</feature>
<feature type="region of interest" description="Disordered" evidence="2">
    <location>
        <begin position="1"/>
        <end position="25"/>
    </location>
</feature>
<feature type="compositionally biased region" description="Low complexity" evidence="2">
    <location>
        <begin position="7"/>
        <end position="25"/>
    </location>
</feature>
<feature type="binding site" evidence="1">
    <location>
        <begin position="67"/>
        <end position="74"/>
    </location>
    <ligand>
        <name>ATP</name>
        <dbReference type="ChEBI" id="CHEBI:30616"/>
    </ligand>
</feature>
<accession>Q2T4S8</accession>